<reference key="1">
    <citation type="journal article" date="2007" name="Genome Biol.">
        <title>Characterization and modeling of the Haemophilus influenzae core and supragenomes based on the complete genomic sequences of Rd and 12 clinical nontypeable strains.</title>
        <authorList>
            <person name="Hogg J.S."/>
            <person name="Hu F.Z."/>
            <person name="Janto B."/>
            <person name="Boissy R."/>
            <person name="Hayes J."/>
            <person name="Keefe R."/>
            <person name="Post J.C."/>
            <person name="Ehrlich G.D."/>
        </authorList>
    </citation>
    <scope>NUCLEOTIDE SEQUENCE [LARGE SCALE GENOMIC DNA]</scope>
    <source>
        <strain>PittGG</strain>
    </source>
</reference>
<dbReference type="EC" id="6.1.1.14" evidence="1"/>
<dbReference type="EMBL" id="CP000672">
    <property type="protein sequence ID" value="ABR00474.1"/>
    <property type="molecule type" value="Genomic_DNA"/>
</dbReference>
<dbReference type="SMR" id="A5UI68"/>
<dbReference type="KEGG" id="hiq:CGSHiGG_08200"/>
<dbReference type="HOGENOM" id="CLU_057066_1_0_6"/>
<dbReference type="Proteomes" id="UP000001990">
    <property type="component" value="Chromosome"/>
</dbReference>
<dbReference type="GO" id="GO:0005829">
    <property type="term" value="C:cytosol"/>
    <property type="evidence" value="ECO:0007669"/>
    <property type="project" value="TreeGrafter"/>
</dbReference>
<dbReference type="GO" id="GO:0005524">
    <property type="term" value="F:ATP binding"/>
    <property type="evidence" value="ECO:0007669"/>
    <property type="project" value="UniProtKB-UniRule"/>
</dbReference>
<dbReference type="GO" id="GO:0004820">
    <property type="term" value="F:glycine-tRNA ligase activity"/>
    <property type="evidence" value="ECO:0007669"/>
    <property type="project" value="UniProtKB-UniRule"/>
</dbReference>
<dbReference type="GO" id="GO:0006426">
    <property type="term" value="P:glycyl-tRNA aminoacylation"/>
    <property type="evidence" value="ECO:0007669"/>
    <property type="project" value="UniProtKB-UniRule"/>
</dbReference>
<dbReference type="CDD" id="cd00733">
    <property type="entry name" value="GlyRS_alpha_core"/>
    <property type="match status" value="1"/>
</dbReference>
<dbReference type="FunFam" id="1.20.58.180:FF:000001">
    <property type="entry name" value="Glycine--tRNA ligase alpha subunit"/>
    <property type="match status" value="1"/>
</dbReference>
<dbReference type="FunFam" id="3.30.930.10:FF:000006">
    <property type="entry name" value="Glycine--tRNA ligase alpha subunit"/>
    <property type="match status" value="1"/>
</dbReference>
<dbReference type="Gene3D" id="3.30.930.10">
    <property type="entry name" value="Bira Bifunctional Protein, Domain 2"/>
    <property type="match status" value="1"/>
</dbReference>
<dbReference type="Gene3D" id="1.20.58.180">
    <property type="entry name" value="Class II aaRS and biotin synthetases, domain 2"/>
    <property type="match status" value="1"/>
</dbReference>
<dbReference type="HAMAP" id="MF_00254">
    <property type="entry name" value="Gly_tRNA_synth_alpha"/>
    <property type="match status" value="1"/>
</dbReference>
<dbReference type="InterPro" id="IPR045864">
    <property type="entry name" value="aa-tRNA-synth_II/BPL/LPL"/>
</dbReference>
<dbReference type="InterPro" id="IPR006194">
    <property type="entry name" value="Gly-tRNA-synth_heterodimer"/>
</dbReference>
<dbReference type="InterPro" id="IPR002310">
    <property type="entry name" value="Gly-tRNA_ligase_asu"/>
</dbReference>
<dbReference type="NCBIfam" id="TIGR00388">
    <property type="entry name" value="glyQ"/>
    <property type="match status" value="1"/>
</dbReference>
<dbReference type="NCBIfam" id="NF006827">
    <property type="entry name" value="PRK09348.1"/>
    <property type="match status" value="1"/>
</dbReference>
<dbReference type="PANTHER" id="PTHR30075:SF2">
    <property type="entry name" value="GLYCINE--TRNA LIGASE, CHLOROPLASTIC_MITOCHONDRIAL 2"/>
    <property type="match status" value="1"/>
</dbReference>
<dbReference type="PANTHER" id="PTHR30075">
    <property type="entry name" value="GLYCYL-TRNA SYNTHETASE"/>
    <property type="match status" value="1"/>
</dbReference>
<dbReference type="Pfam" id="PF02091">
    <property type="entry name" value="tRNA-synt_2e"/>
    <property type="match status" value="1"/>
</dbReference>
<dbReference type="PRINTS" id="PR01044">
    <property type="entry name" value="TRNASYNTHGA"/>
</dbReference>
<dbReference type="SUPFAM" id="SSF55681">
    <property type="entry name" value="Class II aaRS and biotin synthetases"/>
    <property type="match status" value="1"/>
</dbReference>
<dbReference type="PROSITE" id="PS50861">
    <property type="entry name" value="AA_TRNA_LIGASE_II_GLYAB"/>
    <property type="match status" value="1"/>
</dbReference>
<keyword id="KW-0030">Aminoacyl-tRNA synthetase</keyword>
<keyword id="KW-0067">ATP-binding</keyword>
<keyword id="KW-0963">Cytoplasm</keyword>
<keyword id="KW-0436">Ligase</keyword>
<keyword id="KW-0547">Nucleotide-binding</keyword>
<keyword id="KW-0648">Protein biosynthesis</keyword>
<evidence type="ECO:0000255" key="1">
    <source>
        <dbReference type="HAMAP-Rule" id="MF_00254"/>
    </source>
</evidence>
<feature type="chain" id="PRO_1000047429" description="Glycine--tRNA ligase alpha subunit">
    <location>
        <begin position="1"/>
        <end position="302"/>
    </location>
</feature>
<comment type="catalytic activity">
    <reaction evidence="1">
        <text>tRNA(Gly) + glycine + ATP = glycyl-tRNA(Gly) + AMP + diphosphate</text>
        <dbReference type="Rhea" id="RHEA:16013"/>
        <dbReference type="Rhea" id="RHEA-COMP:9664"/>
        <dbReference type="Rhea" id="RHEA-COMP:9683"/>
        <dbReference type="ChEBI" id="CHEBI:30616"/>
        <dbReference type="ChEBI" id="CHEBI:33019"/>
        <dbReference type="ChEBI" id="CHEBI:57305"/>
        <dbReference type="ChEBI" id="CHEBI:78442"/>
        <dbReference type="ChEBI" id="CHEBI:78522"/>
        <dbReference type="ChEBI" id="CHEBI:456215"/>
        <dbReference type="EC" id="6.1.1.14"/>
    </reaction>
</comment>
<comment type="subunit">
    <text evidence="1">Tetramer of two alpha and two beta subunits.</text>
</comment>
<comment type="subcellular location">
    <subcellularLocation>
        <location evidence="1">Cytoplasm</location>
    </subcellularLocation>
</comment>
<comment type="similarity">
    <text evidence="1">Belongs to the class-II aminoacyl-tRNA synthetase family.</text>
</comment>
<gene>
    <name evidence="1" type="primary">glyQ</name>
    <name type="ordered locus">CGSHiGG_08200</name>
</gene>
<name>SYGA_HAEIG</name>
<protein>
    <recommendedName>
        <fullName evidence="1">Glycine--tRNA ligase alpha subunit</fullName>
        <ecNumber evidence="1">6.1.1.14</ecNumber>
    </recommendedName>
    <alternativeName>
        <fullName evidence="1">Glycyl-tRNA synthetase alpha subunit</fullName>
        <shortName evidence="1">GlyRS</shortName>
    </alternativeName>
</protein>
<organism>
    <name type="scientific">Haemophilus influenzae (strain PittGG)</name>
    <dbReference type="NCBI Taxonomy" id="374931"/>
    <lineage>
        <taxon>Bacteria</taxon>
        <taxon>Pseudomonadati</taxon>
        <taxon>Pseudomonadota</taxon>
        <taxon>Gammaproteobacteria</taxon>
        <taxon>Pasteurellales</taxon>
        <taxon>Pasteurellaceae</taxon>
        <taxon>Haemophilus</taxon>
    </lineage>
</organism>
<sequence length="302" mass="34501">MSTKFNVKTFQGMILALQEYWANQGCTIVQPFDMEVGAGTSHPMTALRALGPEPMAFAYVQPSRRPTDGRYGENPNRLQHYYQFQVVIKPSPDNIQELYLGSLEMLGFDPTQNDIRFVEDNWENPTLGAWGLGWEVWLNGMEVTQFTYFQQVGGLECKPVTGEVTYGLERLAMYIQGVDSVYDLVWSDGPLGKTTYGDVFHQNEVEQSTYNFEHANTDFLFYCFDQYEKEAQELLALEKPLPLPAYERILKAAHSFNLLDARKAISVTERQRYILRIRTLTKGVAEAYYASREALGFPGCKK</sequence>
<proteinExistence type="inferred from homology"/>
<accession>A5UI68</accession>